<protein>
    <recommendedName>
        <fullName evidence="1">Phosphatidylserine decarboxylase proenzyme</fullName>
        <ecNumber evidence="1">4.1.1.65</ecNumber>
    </recommendedName>
    <component>
        <recommendedName>
            <fullName evidence="1">Phosphatidylserine decarboxylase alpha chain</fullName>
        </recommendedName>
    </component>
    <component>
        <recommendedName>
            <fullName evidence="1">Phosphatidylserine decarboxylase beta chain</fullName>
        </recommendedName>
    </component>
</protein>
<reference key="1">
    <citation type="submission" date="2008-06" db="EMBL/GenBank/DDBJ databases">
        <title>Genome and proteome analysis of A. pleuropneumoniae serotype 7.</title>
        <authorList>
            <person name="Linke B."/>
            <person name="Buettner F."/>
            <person name="Martinez-Arias R."/>
            <person name="Goesmann A."/>
            <person name="Baltes N."/>
            <person name="Tegetmeyer H."/>
            <person name="Singh M."/>
            <person name="Gerlach G.F."/>
        </authorList>
    </citation>
    <scope>NUCLEOTIDE SEQUENCE [LARGE SCALE GENOMIC DNA]</scope>
    <source>
        <strain>AP76</strain>
    </source>
</reference>
<feature type="chain" id="PRO_1000131328" description="Phosphatidylserine decarboxylase beta chain" evidence="1">
    <location>
        <begin position="1"/>
        <end position="262"/>
    </location>
</feature>
<feature type="chain" id="PRO_1000131329" description="Phosphatidylserine decarboxylase alpha chain" evidence="1">
    <location>
        <begin position="263"/>
        <end position="296"/>
    </location>
</feature>
<feature type="active site" description="Charge relay system; for autoendoproteolytic cleavage activity" evidence="1">
    <location>
        <position position="100"/>
    </location>
</feature>
<feature type="active site" description="Charge relay system; for autoendoproteolytic cleavage activity" evidence="1">
    <location>
        <position position="157"/>
    </location>
</feature>
<feature type="active site" description="Charge relay system; for autoendoproteolytic cleavage activity" evidence="1">
    <location>
        <position position="263"/>
    </location>
</feature>
<feature type="active site" description="Schiff-base intermediate with substrate; via pyruvic acid; for decarboxylase activity" evidence="1">
    <location>
        <position position="263"/>
    </location>
</feature>
<feature type="site" description="Cleavage (non-hydrolytic); by autocatalysis" evidence="1">
    <location>
        <begin position="262"/>
        <end position="263"/>
    </location>
</feature>
<feature type="modified residue" description="Pyruvic acid (Ser); by autocatalysis" evidence="1">
    <location>
        <position position="263"/>
    </location>
</feature>
<proteinExistence type="inferred from homology"/>
<evidence type="ECO:0000255" key="1">
    <source>
        <dbReference type="HAMAP-Rule" id="MF_00662"/>
    </source>
</evidence>
<dbReference type="EC" id="4.1.1.65" evidence="1"/>
<dbReference type="EMBL" id="CP001091">
    <property type="protein sequence ID" value="ACE62184.1"/>
    <property type="molecule type" value="Genomic_DNA"/>
</dbReference>
<dbReference type="SMR" id="B3H2F9"/>
<dbReference type="KEGG" id="apa:APP7_1532"/>
<dbReference type="HOGENOM" id="CLU_029061_4_1_6"/>
<dbReference type="UniPathway" id="UPA00558">
    <property type="reaction ID" value="UER00616"/>
</dbReference>
<dbReference type="Proteomes" id="UP000001226">
    <property type="component" value="Chromosome"/>
</dbReference>
<dbReference type="GO" id="GO:0005886">
    <property type="term" value="C:plasma membrane"/>
    <property type="evidence" value="ECO:0007669"/>
    <property type="project" value="UniProtKB-SubCell"/>
</dbReference>
<dbReference type="GO" id="GO:0004609">
    <property type="term" value="F:phosphatidylserine decarboxylase activity"/>
    <property type="evidence" value="ECO:0007669"/>
    <property type="project" value="UniProtKB-UniRule"/>
</dbReference>
<dbReference type="GO" id="GO:0006646">
    <property type="term" value="P:phosphatidylethanolamine biosynthetic process"/>
    <property type="evidence" value="ECO:0007669"/>
    <property type="project" value="UniProtKB-UniRule"/>
</dbReference>
<dbReference type="HAMAP" id="MF_00662">
    <property type="entry name" value="PS_decarb_PSD_B_type1"/>
    <property type="match status" value="1"/>
</dbReference>
<dbReference type="InterPro" id="IPR003817">
    <property type="entry name" value="PS_Dcarbxylase"/>
</dbReference>
<dbReference type="InterPro" id="IPR033177">
    <property type="entry name" value="PSD-B"/>
</dbReference>
<dbReference type="InterPro" id="IPR033178">
    <property type="entry name" value="PSD_type1_pro"/>
</dbReference>
<dbReference type="NCBIfam" id="TIGR00163">
    <property type="entry name" value="PS_decarb"/>
    <property type="match status" value="1"/>
</dbReference>
<dbReference type="PANTHER" id="PTHR10067">
    <property type="entry name" value="PHOSPHATIDYLSERINE DECARBOXYLASE"/>
    <property type="match status" value="1"/>
</dbReference>
<dbReference type="PANTHER" id="PTHR10067:SF6">
    <property type="entry name" value="PHOSPHATIDYLSERINE DECARBOXYLASE PROENZYME, MITOCHONDRIAL"/>
    <property type="match status" value="1"/>
</dbReference>
<dbReference type="Pfam" id="PF02666">
    <property type="entry name" value="PS_Dcarbxylase"/>
    <property type="match status" value="1"/>
</dbReference>
<accession>B3H2F9</accession>
<gene>
    <name evidence="1" type="primary">psd</name>
    <name type="ordered locus">APP7_1532</name>
</gene>
<organism>
    <name type="scientific">Actinobacillus pleuropneumoniae serotype 7 (strain AP76)</name>
    <dbReference type="NCBI Taxonomy" id="537457"/>
    <lineage>
        <taxon>Bacteria</taxon>
        <taxon>Pseudomonadati</taxon>
        <taxon>Pseudomonadota</taxon>
        <taxon>Gammaproteobacteria</taxon>
        <taxon>Pasteurellales</taxon>
        <taxon>Pasteurellaceae</taxon>
        <taxon>Actinobacillus</taxon>
    </lineage>
</organism>
<keyword id="KW-1003">Cell membrane</keyword>
<keyword id="KW-0210">Decarboxylase</keyword>
<keyword id="KW-0444">Lipid biosynthesis</keyword>
<keyword id="KW-0443">Lipid metabolism</keyword>
<keyword id="KW-0456">Lyase</keyword>
<keyword id="KW-0472">Membrane</keyword>
<keyword id="KW-0594">Phospholipid biosynthesis</keyword>
<keyword id="KW-1208">Phospholipid metabolism</keyword>
<keyword id="KW-0670">Pyruvate</keyword>
<keyword id="KW-0865">Zymogen</keyword>
<sequence length="296" mass="33654">MSLKPYATPTYWQRVKVAFQYIFPQLPVTRLAGWLAEQKWGAVTHFIIRTFAKQYKVNLSEAQKSNASDYATFNEFFIRPLKENARPINQDAQALCLPADGKVSESGKIEDDRLLQAKGHFFTLETLLANDQEMANKFKDGHFITTYLSPRDYHRVHMPCDATLRKMIYVPGELFSVNPFLAEHVPNLFARNERVICEFETEFGPMVQILVGATITASMSTVWAGIINPPRTKEVVEYHYETSGETAVHLKKGQEMGAFRLGSTVINLFPKDSVEFEAHLQAGVETRMGERLAKIK</sequence>
<name>PSD_ACTP7</name>
<comment type="function">
    <text evidence="1">Catalyzes the formation of phosphatidylethanolamine (PtdEtn) from phosphatidylserine (PtdSer).</text>
</comment>
<comment type="catalytic activity">
    <reaction evidence="1">
        <text>a 1,2-diacyl-sn-glycero-3-phospho-L-serine + H(+) = a 1,2-diacyl-sn-glycero-3-phosphoethanolamine + CO2</text>
        <dbReference type="Rhea" id="RHEA:20828"/>
        <dbReference type="ChEBI" id="CHEBI:15378"/>
        <dbReference type="ChEBI" id="CHEBI:16526"/>
        <dbReference type="ChEBI" id="CHEBI:57262"/>
        <dbReference type="ChEBI" id="CHEBI:64612"/>
        <dbReference type="EC" id="4.1.1.65"/>
    </reaction>
</comment>
<comment type="cofactor">
    <cofactor evidence="1">
        <name>pyruvate</name>
        <dbReference type="ChEBI" id="CHEBI:15361"/>
    </cofactor>
    <text evidence="1">Binds 1 pyruvoyl group covalently per subunit.</text>
</comment>
<comment type="pathway">
    <text evidence="1">Phospholipid metabolism; phosphatidylethanolamine biosynthesis; phosphatidylethanolamine from CDP-diacylglycerol: step 2/2.</text>
</comment>
<comment type="subunit">
    <text evidence="1">Heterodimer of a large membrane-associated beta subunit and a small pyruvoyl-containing alpha subunit.</text>
</comment>
<comment type="subcellular location">
    <subcellularLocation>
        <location evidence="1">Cell membrane</location>
        <topology evidence="1">Peripheral membrane protein</topology>
    </subcellularLocation>
</comment>
<comment type="PTM">
    <text evidence="1">Is synthesized initially as an inactive proenzyme. Formation of the active enzyme involves a self-maturation process in which the active site pyruvoyl group is generated from an internal serine residue via an autocatalytic post-translational modification. Two non-identical subunits are generated from the proenzyme in this reaction, and the pyruvate is formed at the N-terminus of the alpha chain, which is derived from the carboxyl end of the proenzyme. The autoendoproteolytic cleavage occurs by a canonical serine protease mechanism, in which the side chain hydroxyl group of the serine supplies its oxygen atom to form the C-terminus of the beta chain, while the remainder of the serine residue undergoes an oxidative deamination to produce ammonia and the pyruvoyl prosthetic group on the alpha chain. During this reaction, the Ser that is part of the protease active site of the proenzyme becomes the pyruvoyl prosthetic group, which constitutes an essential element of the active site of the mature decarboxylase.</text>
</comment>
<comment type="similarity">
    <text evidence="1">Belongs to the phosphatidylserine decarboxylase family. PSD-B subfamily. Prokaryotic type I sub-subfamily.</text>
</comment>